<protein>
    <recommendedName>
        <fullName evidence="1">Orotate phosphoribosyltransferase</fullName>
        <shortName evidence="1">OPRT</shortName>
        <shortName evidence="1">OPRTase</shortName>
        <ecNumber evidence="1">2.4.2.10</ecNumber>
    </recommendedName>
</protein>
<evidence type="ECO:0000255" key="1">
    <source>
        <dbReference type="HAMAP-Rule" id="MF_01208"/>
    </source>
</evidence>
<proteinExistence type="inferred from homology"/>
<gene>
    <name evidence="1" type="primary">pyrE</name>
    <name type="ordered locus">ECIAI1_3813</name>
</gene>
<comment type="function">
    <text evidence="1">Catalyzes the transfer of a ribosyl phosphate group from 5-phosphoribose 1-diphosphate to orotate, leading to the formation of orotidine monophosphate (OMP).</text>
</comment>
<comment type="catalytic activity">
    <reaction evidence="1">
        <text>orotidine 5'-phosphate + diphosphate = orotate + 5-phospho-alpha-D-ribose 1-diphosphate</text>
        <dbReference type="Rhea" id="RHEA:10380"/>
        <dbReference type="ChEBI" id="CHEBI:30839"/>
        <dbReference type="ChEBI" id="CHEBI:33019"/>
        <dbReference type="ChEBI" id="CHEBI:57538"/>
        <dbReference type="ChEBI" id="CHEBI:58017"/>
        <dbReference type="EC" id="2.4.2.10"/>
    </reaction>
</comment>
<comment type="cofactor">
    <cofactor evidence="1">
        <name>Mg(2+)</name>
        <dbReference type="ChEBI" id="CHEBI:18420"/>
    </cofactor>
</comment>
<comment type="pathway">
    <text evidence="1">Pyrimidine metabolism; UMP biosynthesis via de novo pathway; UMP from orotate: step 1/2.</text>
</comment>
<comment type="subunit">
    <text evidence="1">Homodimer.</text>
</comment>
<comment type="similarity">
    <text evidence="1">Belongs to the purine/pyrimidine phosphoribosyltransferase family. PyrE subfamily.</text>
</comment>
<reference key="1">
    <citation type="journal article" date="2009" name="PLoS Genet.">
        <title>Organised genome dynamics in the Escherichia coli species results in highly diverse adaptive paths.</title>
        <authorList>
            <person name="Touchon M."/>
            <person name="Hoede C."/>
            <person name="Tenaillon O."/>
            <person name="Barbe V."/>
            <person name="Baeriswyl S."/>
            <person name="Bidet P."/>
            <person name="Bingen E."/>
            <person name="Bonacorsi S."/>
            <person name="Bouchier C."/>
            <person name="Bouvet O."/>
            <person name="Calteau A."/>
            <person name="Chiapello H."/>
            <person name="Clermont O."/>
            <person name="Cruveiller S."/>
            <person name="Danchin A."/>
            <person name="Diard M."/>
            <person name="Dossat C."/>
            <person name="Karoui M.E."/>
            <person name="Frapy E."/>
            <person name="Garry L."/>
            <person name="Ghigo J.M."/>
            <person name="Gilles A.M."/>
            <person name="Johnson J."/>
            <person name="Le Bouguenec C."/>
            <person name="Lescat M."/>
            <person name="Mangenot S."/>
            <person name="Martinez-Jehanne V."/>
            <person name="Matic I."/>
            <person name="Nassif X."/>
            <person name="Oztas S."/>
            <person name="Petit M.A."/>
            <person name="Pichon C."/>
            <person name="Rouy Z."/>
            <person name="Ruf C.S."/>
            <person name="Schneider D."/>
            <person name="Tourret J."/>
            <person name="Vacherie B."/>
            <person name="Vallenet D."/>
            <person name="Medigue C."/>
            <person name="Rocha E.P.C."/>
            <person name="Denamur E."/>
        </authorList>
    </citation>
    <scope>NUCLEOTIDE SEQUENCE [LARGE SCALE GENOMIC DNA]</scope>
    <source>
        <strain>IAI1</strain>
    </source>
</reference>
<keyword id="KW-0328">Glycosyltransferase</keyword>
<keyword id="KW-0460">Magnesium</keyword>
<keyword id="KW-0665">Pyrimidine biosynthesis</keyword>
<keyword id="KW-0808">Transferase</keyword>
<accession>B7M4C7</accession>
<dbReference type="EC" id="2.4.2.10" evidence="1"/>
<dbReference type="EMBL" id="CU928160">
    <property type="protein sequence ID" value="CAR00610.1"/>
    <property type="molecule type" value="Genomic_DNA"/>
</dbReference>
<dbReference type="RefSeq" id="WP_000806177.1">
    <property type="nucleotide sequence ID" value="NC_011741.1"/>
</dbReference>
<dbReference type="SMR" id="B7M4C7"/>
<dbReference type="GeneID" id="75202211"/>
<dbReference type="KEGG" id="ecr:ECIAI1_3813"/>
<dbReference type="HOGENOM" id="CLU_074878_0_1_6"/>
<dbReference type="UniPathway" id="UPA00070">
    <property type="reaction ID" value="UER00119"/>
</dbReference>
<dbReference type="GO" id="GO:0005737">
    <property type="term" value="C:cytoplasm"/>
    <property type="evidence" value="ECO:0007669"/>
    <property type="project" value="TreeGrafter"/>
</dbReference>
<dbReference type="GO" id="GO:0000287">
    <property type="term" value="F:magnesium ion binding"/>
    <property type="evidence" value="ECO:0007669"/>
    <property type="project" value="UniProtKB-UniRule"/>
</dbReference>
<dbReference type="GO" id="GO:0004588">
    <property type="term" value="F:orotate phosphoribosyltransferase activity"/>
    <property type="evidence" value="ECO:0007669"/>
    <property type="project" value="UniProtKB-UniRule"/>
</dbReference>
<dbReference type="GO" id="GO:0006207">
    <property type="term" value="P:'de novo' pyrimidine nucleobase biosynthetic process"/>
    <property type="evidence" value="ECO:0007669"/>
    <property type="project" value="TreeGrafter"/>
</dbReference>
<dbReference type="GO" id="GO:0044205">
    <property type="term" value="P:'de novo' UMP biosynthetic process"/>
    <property type="evidence" value="ECO:0007669"/>
    <property type="project" value="UniProtKB-UniRule"/>
</dbReference>
<dbReference type="GO" id="GO:0046132">
    <property type="term" value="P:pyrimidine ribonucleoside biosynthetic process"/>
    <property type="evidence" value="ECO:0007669"/>
    <property type="project" value="TreeGrafter"/>
</dbReference>
<dbReference type="CDD" id="cd06223">
    <property type="entry name" value="PRTases_typeI"/>
    <property type="match status" value="1"/>
</dbReference>
<dbReference type="FunFam" id="3.40.50.2020:FF:000008">
    <property type="entry name" value="Orotate phosphoribosyltransferase"/>
    <property type="match status" value="1"/>
</dbReference>
<dbReference type="Gene3D" id="3.40.50.2020">
    <property type="match status" value="1"/>
</dbReference>
<dbReference type="HAMAP" id="MF_01208">
    <property type="entry name" value="PyrE"/>
    <property type="match status" value="1"/>
</dbReference>
<dbReference type="InterPro" id="IPR023031">
    <property type="entry name" value="OPRT"/>
</dbReference>
<dbReference type="InterPro" id="IPR004467">
    <property type="entry name" value="Or_phspho_trans_dom"/>
</dbReference>
<dbReference type="InterPro" id="IPR000836">
    <property type="entry name" value="PRibTrfase_dom"/>
</dbReference>
<dbReference type="InterPro" id="IPR029057">
    <property type="entry name" value="PRTase-like"/>
</dbReference>
<dbReference type="NCBIfam" id="TIGR00336">
    <property type="entry name" value="pyrE"/>
    <property type="match status" value="1"/>
</dbReference>
<dbReference type="PANTHER" id="PTHR46683">
    <property type="entry name" value="OROTATE PHOSPHORIBOSYLTRANSFERASE 1-RELATED"/>
    <property type="match status" value="1"/>
</dbReference>
<dbReference type="PANTHER" id="PTHR46683:SF1">
    <property type="entry name" value="OROTATE PHOSPHORIBOSYLTRANSFERASE 1-RELATED"/>
    <property type="match status" value="1"/>
</dbReference>
<dbReference type="Pfam" id="PF00156">
    <property type="entry name" value="Pribosyltran"/>
    <property type="match status" value="1"/>
</dbReference>
<dbReference type="SUPFAM" id="SSF53271">
    <property type="entry name" value="PRTase-like"/>
    <property type="match status" value="1"/>
</dbReference>
<dbReference type="PROSITE" id="PS00103">
    <property type="entry name" value="PUR_PYR_PR_TRANSFER"/>
    <property type="match status" value="1"/>
</dbReference>
<name>PYRE_ECO8A</name>
<sequence>MKPYQRQFIEFALSKQVLKFGEFTLKSGRKSPYFFNAGLFNTGRDLALLGRFYAEALVDSGIEFDLLFGPAYKGIPIATTTAVALAEHHDLDLPYCFNRKEAKDHGEGGNLVGSALQGRVMLVDDVITAGTAIRESMEIIQANGATLAGVLISLDRQERGRGEISAIQEVERDYNCKVISIITLKDLIAYLEEKPEMAEHLAAVKAYREEFGV</sequence>
<organism>
    <name type="scientific">Escherichia coli O8 (strain IAI1)</name>
    <dbReference type="NCBI Taxonomy" id="585034"/>
    <lineage>
        <taxon>Bacteria</taxon>
        <taxon>Pseudomonadati</taxon>
        <taxon>Pseudomonadota</taxon>
        <taxon>Gammaproteobacteria</taxon>
        <taxon>Enterobacterales</taxon>
        <taxon>Enterobacteriaceae</taxon>
        <taxon>Escherichia</taxon>
    </lineage>
</organism>
<feature type="chain" id="PRO_1000138788" description="Orotate phosphoribosyltransferase">
    <location>
        <begin position="1"/>
        <end position="213"/>
    </location>
</feature>
<feature type="binding site" description="in other chain" evidence="1">
    <location>
        <position position="26"/>
    </location>
    <ligand>
        <name>5-phospho-alpha-D-ribose 1-diphosphate</name>
        <dbReference type="ChEBI" id="CHEBI:58017"/>
        <note>ligand shared between dimeric partners</note>
    </ligand>
</feature>
<feature type="binding site" evidence="1">
    <location>
        <begin position="34"/>
        <end position="35"/>
    </location>
    <ligand>
        <name>orotate</name>
        <dbReference type="ChEBI" id="CHEBI:30839"/>
    </ligand>
</feature>
<feature type="binding site" description="in other chain" evidence="1">
    <location>
        <begin position="72"/>
        <end position="73"/>
    </location>
    <ligand>
        <name>5-phospho-alpha-D-ribose 1-diphosphate</name>
        <dbReference type="ChEBI" id="CHEBI:58017"/>
        <note>ligand shared between dimeric partners</note>
    </ligand>
</feature>
<feature type="binding site" evidence="1">
    <location>
        <position position="99"/>
    </location>
    <ligand>
        <name>5-phospho-alpha-D-ribose 1-diphosphate</name>
        <dbReference type="ChEBI" id="CHEBI:58017"/>
        <note>ligand shared between dimeric partners</note>
    </ligand>
</feature>
<feature type="binding site" description="in other chain" evidence="1">
    <location>
        <position position="100"/>
    </location>
    <ligand>
        <name>5-phospho-alpha-D-ribose 1-diphosphate</name>
        <dbReference type="ChEBI" id="CHEBI:58017"/>
        <note>ligand shared between dimeric partners</note>
    </ligand>
</feature>
<feature type="binding site" evidence="1">
    <location>
        <position position="103"/>
    </location>
    <ligand>
        <name>5-phospho-alpha-D-ribose 1-diphosphate</name>
        <dbReference type="ChEBI" id="CHEBI:58017"/>
        <note>ligand shared between dimeric partners</note>
    </ligand>
</feature>
<feature type="binding site" evidence="1">
    <location>
        <position position="105"/>
    </location>
    <ligand>
        <name>5-phospho-alpha-D-ribose 1-diphosphate</name>
        <dbReference type="ChEBI" id="CHEBI:58017"/>
        <note>ligand shared between dimeric partners</note>
    </ligand>
</feature>
<feature type="binding site" description="in other chain" evidence="1">
    <location>
        <begin position="124"/>
        <end position="132"/>
    </location>
    <ligand>
        <name>5-phospho-alpha-D-ribose 1-diphosphate</name>
        <dbReference type="ChEBI" id="CHEBI:58017"/>
        <note>ligand shared between dimeric partners</note>
    </ligand>
</feature>
<feature type="binding site" evidence="1">
    <location>
        <position position="128"/>
    </location>
    <ligand>
        <name>orotate</name>
        <dbReference type="ChEBI" id="CHEBI:30839"/>
    </ligand>
</feature>
<feature type="binding site" evidence="1">
    <location>
        <position position="156"/>
    </location>
    <ligand>
        <name>orotate</name>
        <dbReference type="ChEBI" id="CHEBI:30839"/>
    </ligand>
</feature>